<reference key="1">
    <citation type="journal article" date="2000" name="Nature">
        <title>The genome sequence of the thermoacidophilic scavenger Thermoplasma acidophilum.</title>
        <authorList>
            <person name="Ruepp A."/>
            <person name="Graml W."/>
            <person name="Santos-Martinez M.-L."/>
            <person name="Koretke K.K."/>
            <person name="Volker C."/>
            <person name="Mewes H.-W."/>
            <person name="Frishman D."/>
            <person name="Stocker S."/>
            <person name="Lupas A.N."/>
            <person name="Baumeister W."/>
        </authorList>
    </citation>
    <scope>NUCLEOTIDE SEQUENCE [LARGE SCALE GENOMIC DNA]</scope>
    <source>
        <strain>ATCC 25905 / DSM 1728 / JCM 9062 / NBRC 15155 / AMRC-C165</strain>
    </source>
</reference>
<feature type="chain" id="PRO_0000155070" description="Elongation factor 1-beta">
    <location>
        <begin position="1"/>
        <end position="88"/>
    </location>
</feature>
<keyword id="KW-0251">Elongation factor</keyword>
<keyword id="KW-0648">Protein biosynthesis</keyword>
<keyword id="KW-1185">Reference proteome</keyword>
<protein>
    <recommendedName>
        <fullName>Elongation factor 1-beta</fullName>
        <shortName>EF-1-beta</shortName>
    </recommendedName>
</protein>
<sequence>MGDVLVTLKILPKDTDADIKSIEDQVKRNIEGLCSINRMDEVDIGFGLKYIKLEIIVQDKEGEIDRVENSISSIEGVGEISTENVSLI</sequence>
<accession>Q9HKN1</accession>
<organism>
    <name type="scientific">Thermoplasma acidophilum (strain ATCC 25905 / DSM 1728 / JCM 9062 / NBRC 15155 / AMRC-C165)</name>
    <dbReference type="NCBI Taxonomy" id="273075"/>
    <lineage>
        <taxon>Archaea</taxon>
        <taxon>Methanobacteriati</taxon>
        <taxon>Thermoplasmatota</taxon>
        <taxon>Thermoplasmata</taxon>
        <taxon>Thermoplasmatales</taxon>
        <taxon>Thermoplasmataceae</taxon>
        <taxon>Thermoplasma</taxon>
    </lineage>
</organism>
<gene>
    <name type="primary">ef1b</name>
    <name type="ordered locus">Ta0566</name>
</gene>
<evidence type="ECO:0000250" key="1"/>
<evidence type="ECO:0000305" key="2"/>
<comment type="function">
    <text evidence="1">Promotes the exchange of GDP for GTP in EF-1-alpha/GDP, thus allowing the regeneration of EF-1-alpha/GTP that could then be used to form the ternary complex EF-1-alpha/GTP/AAtRNA.</text>
</comment>
<comment type="similarity">
    <text evidence="2">Belongs to the EF-1-beta/EF-1-delta family.</text>
</comment>
<comment type="sequence caution" evidence="2">
    <conflict type="erroneous initiation">
        <sequence resource="EMBL-CDS" id="CAC11706"/>
    </conflict>
</comment>
<proteinExistence type="inferred from homology"/>
<name>EF1B_THEAC</name>
<dbReference type="EMBL" id="AL445064">
    <property type="protein sequence ID" value="CAC11706.1"/>
    <property type="status" value="ALT_INIT"/>
    <property type="molecule type" value="Genomic_DNA"/>
</dbReference>
<dbReference type="RefSeq" id="WP_048161648.1">
    <property type="nucleotide sequence ID" value="NC_002578.1"/>
</dbReference>
<dbReference type="SMR" id="Q9HKN1"/>
<dbReference type="STRING" id="273075.gene:9571786"/>
<dbReference type="PaxDb" id="273075-Ta0566"/>
<dbReference type="EnsemblBacteria" id="CAC11706">
    <property type="protein sequence ID" value="CAC11706"/>
    <property type="gene ID" value="CAC11706"/>
</dbReference>
<dbReference type="KEGG" id="tac:Ta0566"/>
<dbReference type="eggNOG" id="arCOG01988">
    <property type="taxonomic scope" value="Archaea"/>
</dbReference>
<dbReference type="HOGENOM" id="CLU_165896_2_0_2"/>
<dbReference type="InParanoid" id="Q9HKN1"/>
<dbReference type="OrthoDB" id="84643at2157"/>
<dbReference type="Proteomes" id="UP000001024">
    <property type="component" value="Chromosome"/>
</dbReference>
<dbReference type="GO" id="GO:0003746">
    <property type="term" value="F:translation elongation factor activity"/>
    <property type="evidence" value="ECO:0007669"/>
    <property type="project" value="UniProtKB-UniRule"/>
</dbReference>
<dbReference type="CDD" id="cd00292">
    <property type="entry name" value="EF1B"/>
    <property type="match status" value="1"/>
</dbReference>
<dbReference type="Gene3D" id="3.30.70.60">
    <property type="match status" value="1"/>
</dbReference>
<dbReference type="HAMAP" id="MF_00043">
    <property type="entry name" value="EF1_beta"/>
    <property type="match status" value="1"/>
</dbReference>
<dbReference type="InterPro" id="IPR036219">
    <property type="entry name" value="eEF-1beta-like_sf"/>
</dbReference>
<dbReference type="InterPro" id="IPR014038">
    <property type="entry name" value="EF1B_bsu/dsu_GNE"/>
</dbReference>
<dbReference type="InterPro" id="IPR014717">
    <property type="entry name" value="Transl_elong_EF1B/ribsomal_bS6"/>
</dbReference>
<dbReference type="InterPro" id="IPR004542">
    <property type="entry name" value="Transl_elong_EF1B_B_arc"/>
</dbReference>
<dbReference type="NCBIfam" id="TIGR00489">
    <property type="entry name" value="aEF-1_beta"/>
    <property type="match status" value="1"/>
</dbReference>
<dbReference type="NCBIfam" id="NF001670">
    <property type="entry name" value="PRK00435.1"/>
    <property type="match status" value="1"/>
</dbReference>
<dbReference type="PANTHER" id="PTHR39647">
    <property type="entry name" value="ELONGATION FACTOR 1-BETA"/>
    <property type="match status" value="1"/>
</dbReference>
<dbReference type="PANTHER" id="PTHR39647:SF1">
    <property type="entry name" value="ELONGATION FACTOR 1-BETA"/>
    <property type="match status" value="1"/>
</dbReference>
<dbReference type="Pfam" id="PF00736">
    <property type="entry name" value="EF1_GNE"/>
    <property type="match status" value="1"/>
</dbReference>
<dbReference type="PIRSF" id="PIRSF006521">
    <property type="entry name" value="Transl_elong_EF1B_B_arc"/>
    <property type="match status" value="1"/>
</dbReference>
<dbReference type="SMART" id="SM00888">
    <property type="entry name" value="EF1_GNE"/>
    <property type="match status" value="1"/>
</dbReference>
<dbReference type="SUPFAM" id="SSF54984">
    <property type="entry name" value="eEF-1beta-like"/>
    <property type="match status" value="1"/>
</dbReference>